<sequence length="186" mass="21770">MNVSKYVAIFSFVFIQLISVGKVFANADEWMTTFRENIAQTWQQPEHYDLYIPAITWHARFAYDKEKTDRYNERPWGGGFGLSRWDEKGNWHGLYAMAFKDSWNKWEPIAGYGWESTWRPLADENFHLGLGFTAGVTARDNWNYIPLPVLLPLASVGYGPVTFQMTYIPGTYNNGNVYFAWMRFQF</sequence>
<name>PAGP_ECOLI</name>
<protein>
    <recommendedName>
        <fullName evidence="1 10">Lipid A palmitoyltransferase PagP</fullName>
        <ecNumber evidence="1 2">2.3.1.251</ecNumber>
    </recommendedName>
    <alternativeName>
        <fullName evidence="1">Lipid A acylation protein</fullName>
    </alternativeName>
</protein>
<feature type="signal peptide" evidence="1">
    <location>
        <begin position="1"/>
        <end position="25"/>
    </location>
</feature>
<feature type="chain" id="PRO_0000079332" description="Lipid A palmitoyltransferase PagP">
    <location>
        <begin position="26"/>
        <end position="186"/>
    </location>
</feature>
<feature type="active site" evidence="1 11 12">
    <location>
        <position position="58"/>
    </location>
</feature>
<feature type="active site" evidence="1 11 12">
    <location>
        <position position="101"/>
    </location>
</feature>
<feature type="active site" evidence="1 11 12">
    <location>
        <position position="102"/>
    </location>
</feature>
<feature type="site" description="Role in lipopolysaccharide recognition" evidence="1">
    <location>
        <position position="67"/>
    </location>
</feature>
<feature type="site" description="Role in the phospholipid gating" evidence="1">
    <location>
        <position position="172"/>
    </location>
</feature>
<feature type="mutagenesis site" description="Drastically reduces palmitoyltransferase activity while leaving expression and membrane insertion intact." evidence="3">
    <original>H</original>
    <variation>F</variation>
    <location>
        <position position="58"/>
    </location>
</feature>
<feature type="mutagenesis site" description="Drastically reduces palmitoyltransferase activity while leaving expression and membrane insertion intact." evidence="3">
    <original>H</original>
    <variation>N</variation>
    <location>
        <position position="58"/>
    </location>
</feature>
<feature type="mutagenesis site" description="Drastically reduces palmitoyltransferase activity while leaving expression and membrane insertion intact." evidence="3">
    <original>D</original>
    <variation>A</variation>
    <location>
        <position position="101"/>
    </location>
</feature>
<feature type="mutagenesis site" description="Drastically reduces palmitoyltransferase activity while leaving expression and membrane insertion intact." evidence="3">
    <original>D</original>
    <variation>N</variation>
    <location>
        <position position="101"/>
    </location>
</feature>
<feature type="mutagenesis site" description="Drastically reduces palmitoyltransferase activity while leaving expression and membrane insertion intact." evidence="3">
    <original>S</original>
    <variation>A</variation>
    <location>
        <position position="102"/>
    </location>
</feature>
<feature type="mutagenesis site" description="Mutant with longer amino-acid side chains at position 113 preferentially transfers pentadecane chain (15:0)." evidence="4">
    <original>G</original>
    <variation>A</variation>
    <location>
        <position position="113"/>
    </location>
</feature>
<feature type="mutagenesis site" description="Mutants with longer amino-acid side chains at position 113 preferentially transfers myristate chain (14:0)." evidence="4">
    <original>G</original>
    <variation>C</variation>
    <location>
        <position position="113"/>
    </location>
</feature>
<feature type="mutagenesis site" description="Mutants with longer amino-acid side chains at position 113 preferentially transfers laurate chain (12:0)." evidence="4">
    <original>G</original>
    <variation>M</variation>
    <location>
        <position position="113"/>
    </location>
</feature>
<feature type="mutagenesis site" description="Fully functional." evidence="3">
    <original>S</original>
    <variation>A</variation>
    <location>
        <position position="155"/>
    </location>
</feature>
<feature type="mutagenesis site" description="Does not cause significant structural perturbations of the enzyme, but induces a 2-fold increase in the palmitoyltransferase activity." evidence="5">
    <original>Y</original>
    <variation>A</variation>
    <location>
        <position position="172"/>
    </location>
</feature>
<feature type="mutagenesis site" description="Does not cause significant structural perturbations of the enzyme, but induces a 2.3-fold increase in the palmitoyltransferase activity." evidence="5">
    <original>Y</original>
    <variation>F</variation>
    <location>
        <position position="172"/>
    </location>
</feature>
<feature type="helix" evidence="14">
    <location>
        <begin position="27"/>
        <end position="43"/>
    </location>
</feature>
<feature type="strand" evidence="14">
    <location>
        <begin position="47"/>
        <end position="60"/>
    </location>
</feature>
<feature type="strand" evidence="14">
    <location>
        <begin position="77"/>
        <end position="85"/>
    </location>
</feature>
<feature type="turn" evidence="13">
    <location>
        <begin position="87"/>
        <end position="89"/>
    </location>
</feature>
<feature type="strand" evidence="14">
    <location>
        <begin position="91"/>
        <end position="100"/>
    </location>
</feature>
<feature type="strand" evidence="13">
    <location>
        <begin position="102"/>
        <end position="104"/>
    </location>
</feature>
<feature type="strand" evidence="14">
    <location>
        <begin position="106"/>
        <end position="118"/>
    </location>
</feature>
<feature type="strand" evidence="14">
    <location>
        <begin position="121"/>
        <end position="123"/>
    </location>
</feature>
<feature type="strand" evidence="14">
    <location>
        <begin position="126"/>
        <end position="138"/>
    </location>
</feature>
<feature type="helix" evidence="14">
    <location>
        <begin position="140"/>
        <end position="142"/>
    </location>
</feature>
<feature type="strand" evidence="14">
    <location>
        <begin position="146"/>
        <end position="158"/>
    </location>
</feature>
<feature type="strand" evidence="14">
    <location>
        <begin position="161"/>
        <end position="168"/>
    </location>
</feature>
<feature type="strand" evidence="14">
    <location>
        <begin position="171"/>
        <end position="174"/>
    </location>
</feature>
<feature type="strand" evidence="14">
    <location>
        <begin position="177"/>
        <end position="186"/>
    </location>
</feature>
<keyword id="KW-0002">3D-structure</keyword>
<keyword id="KW-0012">Acyltransferase</keyword>
<keyword id="KW-0998">Cell outer membrane</keyword>
<keyword id="KW-0903">Direct protein sequencing</keyword>
<keyword id="KW-0472">Membrane</keyword>
<keyword id="KW-1185">Reference proteome</keyword>
<keyword id="KW-0732">Signal</keyword>
<keyword id="KW-0808">Transferase</keyword>
<comment type="function">
    <text evidence="2 5 6">Transfers a palmitate residue from the sn-1 position of a phospholipid to the N-linked hydroxymyristate on the proximal unit of lipid A or its precursors. Phosphatidylglycerol (PtdGro), phosphatidylethanolamine (PtdEtn), phosphatidylserine (PtdSer) and phosphatidic acid (Ptd-OH) are all effective acyl donors.</text>
</comment>
<comment type="catalytic activity">
    <reaction evidence="1 2">
        <text>lipid A (E. coli) + a 1-hexadecanoyl-2-acyl-sn-glycero-3-phosphocholine = hepta-acyl lipid A (E. coli) + a 2-acyl-sn-glycero-3-phosphocholine</text>
        <dbReference type="Rhea" id="RHEA:46864"/>
        <dbReference type="ChEBI" id="CHEBI:57875"/>
        <dbReference type="ChEBI" id="CHEBI:77369"/>
        <dbReference type="ChEBI" id="CHEBI:87048"/>
        <dbReference type="ChEBI" id="CHEBI:134257"/>
        <dbReference type="EC" id="2.3.1.251"/>
    </reaction>
</comment>
<comment type="catalytic activity">
    <reaction evidence="1">
        <text>lipid IIA + a 1-hexadecanoyl-2-acyl-sn-glycero-3-phosphocholine = lipid IIB + a 2-acyl-sn-glycero-3-phosphocholine</text>
        <dbReference type="Rhea" id="RHEA:46872"/>
        <dbReference type="ChEBI" id="CHEBI:57875"/>
        <dbReference type="ChEBI" id="CHEBI:77369"/>
        <dbReference type="ChEBI" id="CHEBI:86226"/>
        <dbReference type="ChEBI" id="CHEBI:87058"/>
        <dbReference type="EC" id="2.3.1.251"/>
    </reaction>
</comment>
<comment type="catalytic activity">
    <reaction evidence="1 2">
        <text>lipid IVA (E. coli) + a 1-hexadecanoyl-2-acyl-sn-glycero-3-phosphocholine = lipid IVB (E. coli) + a 2-acyl-sn-glycero-3-phosphocholine</text>
        <dbReference type="Rhea" id="RHEA:46868"/>
        <dbReference type="ChEBI" id="CHEBI:57875"/>
        <dbReference type="ChEBI" id="CHEBI:58603"/>
        <dbReference type="ChEBI" id="CHEBI:77369"/>
        <dbReference type="ChEBI" id="CHEBI:87049"/>
        <dbReference type="EC" id="2.3.1.251"/>
    </reaction>
</comment>
<comment type="activity regulation">
    <text evidence="4">Inhibited by lauryldimethylamine oxide (LDAO) and dodecylphosphocholine (DPC).</text>
</comment>
<comment type="subunit">
    <text evidence="1 2 4 5">Homodimer.</text>
</comment>
<comment type="subcellular location">
    <subcellularLocation>
        <location evidence="1 2">Cell outer membrane</location>
    </subcellularLocation>
</comment>
<comment type="induction">
    <text evidence="8">In magnesium-deficient conditions.</text>
</comment>
<comment type="miscellaneous">
    <text evidence="7">Overproduction leads to camphor resistance and chromosome condensation.</text>
</comment>
<comment type="similarity">
    <text evidence="1 10">Belongs to the lipid A palmitoyltransferase family.</text>
</comment>
<reference key="1">
    <citation type="journal article" date="1996" name="Genetics">
        <title>Overproduction of three genes leads to camphor resistance and chromosome condensation in Escherichia coli.</title>
        <authorList>
            <person name="Hu K.H."/>
            <person name="Liu E."/>
            <person name="Dean K."/>
            <person name="Gingras M."/>
            <person name="Degraff W."/>
            <person name="Trun N.J."/>
        </authorList>
    </citation>
    <scope>NUCLEOTIDE SEQUENCE [GENOMIC DNA]</scope>
    <source>
        <strain>K12</strain>
    </source>
</reference>
<reference key="2">
    <citation type="submission" date="1994-02" db="EMBL/GenBank/DDBJ databases">
        <authorList>
            <person name="Yamanaka K."/>
            <person name="Mitani T."/>
            <person name="Ogura T."/>
            <person name="Niki H."/>
            <person name="Hiraga S."/>
        </authorList>
    </citation>
    <scope>NUCLEOTIDE SEQUENCE [GENOMIC DNA]</scope>
    <source>
        <strain>K12</strain>
    </source>
</reference>
<reference key="3">
    <citation type="thesis" date="1994" institute="University of Bombay" country="India">
        <title>A new Escherichia coli gene encoding a negative regulator of growth in cold.</title>
        <authorList>
            <person name="Ramanathan Y."/>
            <person name="Narayanarao A.V.S.S."/>
            <person name="Mathur M."/>
            <person name="Mahajan S.K."/>
        </authorList>
    </citation>
    <scope>NUCLEOTIDE SEQUENCE [GENOMIC DNA]</scope>
    <source>
        <strain>K12 / W3110 / ATCC 27325 / DSM 5911</strain>
    </source>
</reference>
<reference key="4">
    <citation type="journal article" date="1996" name="DNA Res.">
        <title>A 718-kb DNA sequence of the Escherichia coli K-12 genome corresponding to the 12.7-28.0 min region on the linkage map.</title>
        <authorList>
            <person name="Oshima T."/>
            <person name="Aiba H."/>
            <person name="Baba T."/>
            <person name="Fujita K."/>
            <person name="Hayashi K."/>
            <person name="Honjo A."/>
            <person name="Ikemoto K."/>
            <person name="Inada T."/>
            <person name="Itoh T."/>
            <person name="Kajihara M."/>
            <person name="Kanai K."/>
            <person name="Kashimoto K."/>
            <person name="Kimura S."/>
            <person name="Kitagawa M."/>
            <person name="Makino K."/>
            <person name="Masuda S."/>
            <person name="Miki T."/>
            <person name="Mizobuchi K."/>
            <person name="Mori H."/>
            <person name="Motomura K."/>
            <person name="Nakamura Y."/>
            <person name="Nashimoto H."/>
            <person name="Nishio Y."/>
            <person name="Saito N."/>
            <person name="Sampei G."/>
            <person name="Seki Y."/>
            <person name="Tagami H."/>
            <person name="Takemoto K."/>
            <person name="Wada C."/>
            <person name="Yamamoto Y."/>
            <person name="Yano M."/>
            <person name="Horiuchi T."/>
        </authorList>
    </citation>
    <scope>NUCLEOTIDE SEQUENCE [LARGE SCALE GENOMIC DNA]</scope>
    <source>
        <strain>K12 / W3110 / ATCC 27325 / DSM 5911</strain>
    </source>
</reference>
<reference key="5">
    <citation type="submission" date="1997-01" db="EMBL/GenBank/DDBJ databases">
        <title>Sequence of minutes 4-25 of Escherichia coli.</title>
        <authorList>
            <person name="Chung E."/>
            <person name="Allen E."/>
            <person name="Araujo R."/>
            <person name="Aparicio A.M."/>
            <person name="Davis K."/>
            <person name="Duncan M."/>
            <person name="Federspiel N."/>
            <person name="Hyman R."/>
            <person name="Kalman S."/>
            <person name="Komp C."/>
            <person name="Kurdi O."/>
            <person name="Lew H."/>
            <person name="Lin D."/>
            <person name="Namath A."/>
            <person name="Oefner P."/>
            <person name="Roberts D."/>
            <person name="Schramm S."/>
            <person name="Davis R.W."/>
        </authorList>
    </citation>
    <scope>NUCLEOTIDE SEQUENCE [LARGE SCALE GENOMIC DNA]</scope>
    <source>
        <strain>K12 / MG1655 / ATCC 47076</strain>
    </source>
</reference>
<reference key="6">
    <citation type="journal article" date="1997" name="Science">
        <title>The complete genome sequence of Escherichia coli K-12.</title>
        <authorList>
            <person name="Blattner F.R."/>
            <person name="Plunkett G. III"/>
            <person name="Bloch C.A."/>
            <person name="Perna N.T."/>
            <person name="Burland V."/>
            <person name="Riley M."/>
            <person name="Collado-Vides J."/>
            <person name="Glasner J.D."/>
            <person name="Rode C.K."/>
            <person name="Mayhew G.F."/>
            <person name="Gregor J."/>
            <person name="Davis N.W."/>
            <person name="Kirkpatrick H.A."/>
            <person name="Goeden M.A."/>
            <person name="Rose D.J."/>
            <person name="Mau B."/>
            <person name="Shao Y."/>
        </authorList>
    </citation>
    <scope>NUCLEOTIDE SEQUENCE [LARGE SCALE GENOMIC DNA]</scope>
    <source>
        <strain>K12 / MG1655 / ATCC 47076</strain>
    </source>
</reference>
<reference key="7">
    <citation type="journal article" date="2006" name="Mol. Syst. Biol.">
        <title>Highly accurate genome sequences of Escherichia coli K-12 strains MG1655 and W3110.</title>
        <authorList>
            <person name="Hayashi K."/>
            <person name="Morooka N."/>
            <person name="Yamamoto Y."/>
            <person name="Fujita K."/>
            <person name="Isono K."/>
            <person name="Choi S."/>
            <person name="Ohtsubo E."/>
            <person name="Baba T."/>
            <person name="Wanner B.L."/>
            <person name="Mori H."/>
            <person name="Horiuchi T."/>
        </authorList>
    </citation>
    <scope>NUCLEOTIDE SEQUENCE [LARGE SCALE GENOMIC DNA]</scope>
    <source>
        <strain>K12 / W3110 / ATCC 27325 / DSM 5911</strain>
    </source>
</reference>
<reference key="8">
    <citation type="journal article" date="2000" name="EMBO J.">
        <title>Transfer of palmitate from phospholipids to lipid A in outer membranes of gram-negative bacteria.</title>
        <authorList>
            <person name="Bishop R.E."/>
            <person name="Gibbons H.S."/>
            <person name="Guina T."/>
            <person name="Trent M.S."/>
            <person name="Miller S.I."/>
            <person name="Raetz C.R."/>
        </authorList>
    </citation>
    <scope>PROTEIN SEQUENCE OF 26-35</scope>
    <scope>FUNCTION AS PALMITOYL TRANSFERASE</scope>
    <scope>CATALYTIC ACTIVITY</scope>
    <scope>SUBUNIT</scope>
    <scope>SUBCELLULAR LOCATION</scope>
    <scope>SUBSTRATE SPECIFICITY</scope>
    <source>
        <strain>K12</strain>
    </source>
</reference>
<reference key="9">
    <citation type="unpublished observations" date="1994-03">
        <authorList>
            <person name="Rudd K.E."/>
        </authorList>
    </citation>
    <scope>IDENTIFICATION</scope>
</reference>
<reference key="10">
    <citation type="journal article" date="1998" name="Cell">
        <title>Lipid A acylation and bacterial resistance against vertebrate antimicrobial peptides.</title>
        <authorList>
            <person name="Guo L."/>
            <person name="Lim K.B."/>
            <person name="Poduje C.M."/>
            <person name="Morad D."/>
            <person name="Gunn J.S."/>
            <person name="Hackett M."/>
            <person name="Miller S.I."/>
        </authorList>
    </citation>
    <scope>INDUCTION</scope>
</reference>
<reference key="11">
    <citation type="journal article" date="2010" name="Biochemistry">
        <title>Inscribing the perimeter of the PagP hydrocarbon ruler by site-specific chemical alkylation.</title>
        <authorList>
            <person name="Khan M.A."/>
            <person name="Moktar J."/>
            <person name="Mott P.J."/>
            <person name="Vu M."/>
            <person name="McKie A.H."/>
            <person name="Pinter T."/>
            <person name="Hof F."/>
            <person name="Bishop R.E."/>
        </authorList>
    </citation>
    <scope>SUBSTRATE SPECIFICITY</scope>
    <scope>FUNCTION</scope>
</reference>
<reference key="12">
    <citation type="journal article" date="2002" name="Proc. Natl. Acad. Sci. U.S.A.">
        <title>Solution structure and dynamics of the outer membrane enzyme PagP by NMR.</title>
        <authorList>
            <person name="Hwang P.M."/>
            <person name="Choy W.Y."/>
            <person name="Lo E.I."/>
            <person name="Chen L."/>
            <person name="Forman-Kay J.D."/>
            <person name="Raetz C.R."/>
            <person name="Prive G.G."/>
            <person name="Bishop R.E."/>
            <person name="Kay L.E."/>
        </authorList>
    </citation>
    <scope>STRUCTURE BY NMR OF 26-186</scope>
    <scope>MUTAGENESIS OF HIS-58; ASP-101; SER-102 AND SER-155</scope>
    <scope>ACTIVE SITE</scope>
</reference>
<reference key="13">
    <citation type="journal article" date="2004" name="EMBO J.">
        <title>A hydrocarbon ruler measures palmitate in the enzymatic acylation of endotoxin.</title>
        <authorList>
            <person name="Ahn V.E."/>
            <person name="Lo E.I."/>
            <person name="Engel C.K."/>
            <person name="Chen L."/>
            <person name="Hwang P.M."/>
            <person name="Kay L.E."/>
            <person name="Bishop R.E."/>
            <person name="Prive G.G."/>
        </authorList>
    </citation>
    <scope>X-RAY CRYSTALLOGRAPHY (1.9 ANGSTROMS) OF 26-186 IN COMPLEX WITH SUBSTRATE ANALOGS</scope>
    <scope>HYDROCARBON RULER SELECTIVITY</scope>
    <scope>MUTAGENESIS OF GLY-113</scope>
    <scope>ACTIVITY REGULATION</scope>
</reference>
<reference key="14">
    <citation type="journal article" date="2010" name="Structure">
        <title>PagP crystallized from SDS/cosolvent reveals the route for phospholipid access to the hydrocarbon ruler.</title>
        <authorList>
            <person name="Cuesta-Seijo J.A."/>
            <person name="Neale C."/>
            <person name="Khan M.A."/>
            <person name="Moktar J."/>
            <person name="Tran C.D."/>
            <person name="Bishop R.E."/>
            <person name="Pomes R."/>
            <person name="Prive G.G."/>
        </authorList>
    </citation>
    <scope>X-RAY CRYSTALLOGRAPHY (1.4 ANGSTROMS) OF 26-186 IN COMPLEX WITH SUBSTRATE ANALOGS</scope>
    <scope>FUNCTION</scope>
    <scope>MUTAGENESIS OF TYR-172</scope>
    <scope>REACTION MECHANISM</scope>
    <scope>ACTIVE SITE</scope>
</reference>
<evidence type="ECO:0000255" key="1">
    <source>
        <dbReference type="HAMAP-Rule" id="MF_00837"/>
    </source>
</evidence>
<evidence type="ECO:0000269" key="2">
    <source>
    </source>
</evidence>
<evidence type="ECO:0000269" key="3">
    <source>
    </source>
</evidence>
<evidence type="ECO:0000269" key="4">
    <source>
    </source>
</evidence>
<evidence type="ECO:0000269" key="5">
    <source>
    </source>
</evidence>
<evidence type="ECO:0000269" key="6">
    <source>
    </source>
</evidence>
<evidence type="ECO:0000269" key="7">
    <source>
    </source>
</evidence>
<evidence type="ECO:0000269" key="8">
    <source>
    </source>
</evidence>
<evidence type="ECO:0000303" key="9">
    <source>
    </source>
</evidence>
<evidence type="ECO:0000305" key="10"/>
<evidence type="ECO:0000305" key="11">
    <source>
    </source>
</evidence>
<evidence type="ECO:0000305" key="12">
    <source>
    </source>
</evidence>
<evidence type="ECO:0007829" key="13">
    <source>
        <dbReference type="PDB" id="1MM4"/>
    </source>
</evidence>
<evidence type="ECO:0007829" key="14">
    <source>
        <dbReference type="PDB" id="3GP6"/>
    </source>
</evidence>
<organism>
    <name type="scientific">Escherichia coli (strain K12)</name>
    <dbReference type="NCBI Taxonomy" id="83333"/>
    <lineage>
        <taxon>Bacteria</taxon>
        <taxon>Pseudomonadati</taxon>
        <taxon>Pseudomonadota</taxon>
        <taxon>Gammaproteobacteria</taxon>
        <taxon>Enterobacterales</taxon>
        <taxon>Enterobacteriaceae</taxon>
        <taxon>Escherichia</taxon>
    </lineage>
</organism>
<accession>P37001</accession>
<accession>P77617</accession>
<accession>Q9R7T4</accession>
<proteinExistence type="evidence at protein level"/>
<gene>
    <name evidence="1" type="primary">pagP</name>
    <name evidence="9" type="synonym">crcA</name>
    <name type="synonym">ybeG</name>
    <name type="ordered locus">b0622</name>
    <name type="ordered locus">JW0617</name>
</gene>
<dbReference type="EC" id="2.3.1.251" evidence="1 2"/>
<dbReference type="EMBL" id="S83396">
    <property type="protein sequence ID" value="AAN86719.1"/>
    <property type="molecule type" value="Genomic_DNA"/>
</dbReference>
<dbReference type="EMBL" id="D28497">
    <property type="status" value="NOT_ANNOTATED_CDS"/>
    <property type="molecule type" value="Genomic_DNA"/>
</dbReference>
<dbReference type="EMBL" id="L29054">
    <property type="protein sequence ID" value="AAA67555.1"/>
    <property type="molecule type" value="Genomic_DNA"/>
</dbReference>
<dbReference type="EMBL" id="U82598">
    <property type="protein sequence ID" value="AAB40822.1"/>
    <property type="molecule type" value="Genomic_DNA"/>
</dbReference>
<dbReference type="EMBL" id="U00096">
    <property type="protein sequence ID" value="AAC73723.1"/>
    <property type="molecule type" value="Genomic_DNA"/>
</dbReference>
<dbReference type="EMBL" id="AP009048">
    <property type="protein sequence ID" value="BAA35265.2"/>
    <property type="molecule type" value="Genomic_DNA"/>
</dbReference>
<dbReference type="PIR" id="D64796">
    <property type="entry name" value="D64796"/>
</dbReference>
<dbReference type="RefSeq" id="NP_415155.1">
    <property type="nucleotide sequence ID" value="NC_000913.3"/>
</dbReference>
<dbReference type="RefSeq" id="WP_001103094.1">
    <property type="nucleotide sequence ID" value="NZ_STEB01000031.1"/>
</dbReference>
<dbReference type="PDB" id="1MM4">
    <property type="method" value="NMR"/>
    <property type="chains" value="A=26-186"/>
</dbReference>
<dbReference type="PDB" id="1MM5">
    <property type="method" value="NMR"/>
    <property type="chains" value="A=26-186"/>
</dbReference>
<dbReference type="PDB" id="1THQ">
    <property type="method" value="X-ray"/>
    <property type="resolution" value="1.90 A"/>
    <property type="chains" value="A=26-186"/>
</dbReference>
<dbReference type="PDB" id="3GP6">
    <property type="method" value="X-ray"/>
    <property type="resolution" value="1.40 A"/>
    <property type="chains" value="A=26-186"/>
</dbReference>
<dbReference type="PDBsum" id="1MM4"/>
<dbReference type="PDBsum" id="1MM5"/>
<dbReference type="PDBsum" id="1THQ"/>
<dbReference type="PDBsum" id="3GP6"/>
<dbReference type="BMRB" id="P37001"/>
<dbReference type="SMR" id="P37001"/>
<dbReference type="BioGRID" id="4260645">
    <property type="interactions" value="351"/>
</dbReference>
<dbReference type="FunCoup" id="P37001">
    <property type="interactions" value="65"/>
</dbReference>
<dbReference type="STRING" id="511145.b0622"/>
<dbReference type="DrugBank" id="DB03967">
    <property type="generic name" value="Dodecyl sulfate"/>
</dbReference>
<dbReference type="DrugBank" id="DB04147">
    <property type="generic name" value="Dodecyldimethylamine N-oxide"/>
</dbReference>
<dbReference type="PaxDb" id="511145-b0622"/>
<dbReference type="EnsemblBacteria" id="AAC73723">
    <property type="protein sequence ID" value="AAC73723"/>
    <property type="gene ID" value="b0622"/>
</dbReference>
<dbReference type="GeneID" id="75205016"/>
<dbReference type="GeneID" id="946360"/>
<dbReference type="KEGG" id="ecj:JW0617"/>
<dbReference type="KEGG" id="eco:b0622"/>
<dbReference type="KEGG" id="ecoc:C3026_03110"/>
<dbReference type="PATRIC" id="fig|1411691.4.peg.1646"/>
<dbReference type="EchoBASE" id="EB2097"/>
<dbReference type="eggNOG" id="ENOG502Z7SY">
    <property type="taxonomic scope" value="Bacteria"/>
</dbReference>
<dbReference type="HOGENOM" id="CLU_104099_0_0_6"/>
<dbReference type="InParanoid" id="P37001"/>
<dbReference type="OMA" id="FFAWLRW"/>
<dbReference type="OrthoDB" id="9156803at2"/>
<dbReference type="BioCyc" id="EcoCyc:EG12180-MONOMER"/>
<dbReference type="BioCyc" id="MetaCyc:EG12180-MONOMER"/>
<dbReference type="BRENDA" id="2.3.1.251">
    <property type="organism ID" value="2026"/>
</dbReference>
<dbReference type="EvolutionaryTrace" id="P37001"/>
<dbReference type="PRO" id="PR:P37001"/>
<dbReference type="Proteomes" id="UP000000625">
    <property type="component" value="Chromosome"/>
</dbReference>
<dbReference type="GO" id="GO:0009279">
    <property type="term" value="C:cell outer membrane"/>
    <property type="evidence" value="ECO:0000314"/>
    <property type="project" value="UniProtKB"/>
</dbReference>
<dbReference type="GO" id="GO:0016416">
    <property type="term" value="F:O-palmitoyltransferase activity"/>
    <property type="evidence" value="ECO:0000314"/>
    <property type="project" value="UniProtKB"/>
</dbReference>
<dbReference type="GO" id="GO:0009245">
    <property type="term" value="P:lipid A biosynthetic process"/>
    <property type="evidence" value="ECO:0000314"/>
    <property type="project" value="UniProtKB"/>
</dbReference>
<dbReference type="FunFam" id="2.40.160.20:FF:000002">
    <property type="entry name" value="Lipid A palmitoyltransferase PagP"/>
    <property type="match status" value="1"/>
</dbReference>
<dbReference type="Gene3D" id="2.40.160.20">
    <property type="match status" value="1"/>
</dbReference>
<dbReference type="HAMAP" id="MF_00837">
    <property type="entry name" value="PagP_transferase"/>
    <property type="match status" value="1"/>
</dbReference>
<dbReference type="InterPro" id="IPR009746">
    <property type="entry name" value="LipidA_acyl_PagP"/>
</dbReference>
<dbReference type="InterPro" id="IPR011250">
    <property type="entry name" value="OMP/PagP_b-brl"/>
</dbReference>
<dbReference type="NCBIfam" id="NF008271">
    <property type="entry name" value="PRK11045.1"/>
    <property type="match status" value="1"/>
</dbReference>
<dbReference type="Pfam" id="PF07017">
    <property type="entry name" value="PagP"/>
    <property type="match status" value="1"/>
</dbReference>
<dbReference type="SUPFAM" id="SSF56925">
    <property type="entry name" value="OMPA-like"/>
    <property type="match status" value="1"/>
</dbReference>